<reference key="1">
    <citation type="journal article" date="1999" name="Nature">
        <title>Sequence and analysis of chromosome 2 of the plant Arabidopsis thaliana.</title>
        <authorList>
            <person name="Lin X."/>
            <person name="Kaul S."/>
            <person name="Rounsley S.D."/>
            <person name="Shea T.P."/>
            <person name="Benito M.-I."/>
            <person name="Town C.D."/>
            <person name="Fujii C.Y."/>
            <person name="Mason T.M."/>
            <person name="Bowman C.L."/>
            <person name="Barnstead M.E."/>
            <person name="Feldblyum T.V."/>
            <person name="Buell C.R."/>
            <person name="Ketchum K.A."/>
            <person name="Lee J.J."/>
            <person name="Ronning C.M."/>
            <person name="Koo H.L."/>
            <person name="Moffat K.S."/>
            <person name="Cronin L.A."/>
            <person name="Shen M."/>
            <person name="Pai G."/>
            <person name="Van Aken S."/>
            <person name="Umayam L."/>
            <person name="Tallon L.J."/>
            <person name="Gill J.E."/>
            <person name="Adams M.D."/>
            <person name="Carrera A.J."/>
            <person name="Creasy T.H."/>
            <person name="Goodman H.M."/>
            <person name="Somerville C.R."/>
            <person name="Copenhaver G.P."/>
            <person name="Preuss D."/>
            <person name="Nierman W.C."/>
            <person name="White O."/>
            <person name="Eisen J.A."/>
            <person name="Salzberg S.L."/>
            <person name="Fraser C.M."/>
            <person name="Venter J.C."/>
        </authorList>
    </citation>
    <scope>NUCLEOTIDE SEQUENCE [LARGE SCALE GENOMIC DNA]</scope>
    <source>
        <strain>cv. Columbia</strain>
    </source>
</reference>
<reference key="2">
    <citation type="journal article" date="2017" name="Plant J.">
        <title>Araport11: a complete reannotation of the Arabidopsis thaliana reference genome.</title>
        <authorList>
            <person name="Cheng C.Y."/>
            <person name="Krishnakumar V."/>
            <person name="Chan A.P."/>
            <person name="Thibaud-Nissen F."/>
            <person name="Schobel S."/>
            <person name="Town C.D."/>
        </authorList>
    </citation>
    <scope>GENOME REANNOTATION</scope>
    <source>
        <strain>cv. Columbia</strain>
    </source>
</reference>
<reference key="3">
    <citation type="journal article" date="2003" name="Science">
        <title>Empirical analysis of transcriptional activity in the Arabidopsis genome.</title>
        <authorList>
            <person name="Yamada K."/>
            <person name="Lim J."/>
            <person name="Dale J.M."/>
            <person name="Chen H."/>
            <person name="Shinn P."/>
            <person name="Palm C.J."/>
            <person name="Southwick A.M."/>
            <person name="Wu H.C."/>
            <person name="Kim C.J."/>
            <person name="Nguyen M."/>
            <person name="Pham P.K."/>
            <person name="Cheuk R.F."/>
            <person name="Karlin-Newmann G."/>
            <person name="Liu S.X."/>
            <person name="Lam B."/>
            <person name="Sakano H."/>
            <person name="Wu T."/>
            <person name="Yu G."/>
            <person name="Miranda M."/>
            <person name="Quach H.L."/>
            <person name="Tripp M."/>
            <person name="Chang C.H."/>
            <person name="Lee J.M."/>
            <person name="Toriumi M.J."/>
            <person name="Chan M.M."/>
            <person name="Tang C.C."/>
            <person name="Onodera C.S."/>
            <person name="Deng J.M."/>
            <person name="Akiyama K."/>
            <person name="Ansari Y."/>
            <person name="Arakawa T."/>
            <person name="Banh J."/>
            <person name="Banno F."/>
            <person name="Bowser L."/>
            <person name="Brooks S.Y."/>
            <person name="Carninci P."/>
            <person name="Chao Q."/>
            <person name="Choy N."/>
            <person name="Enju A."/>
            <person name="Goldsmith A.D."/>
            <person name="Gurjal M."/>
            <person name="Hansen N.F."/>
            <person name="Hayashizaki Y."/>
            <person name="Johnson-Hopson C."/>
            <person name="Hsuan V.W."/>
            <person name="Iida K."/>
            <person name="Karnes M."/>
            <person name="Khan S."/>
            <person name="Koesema E."/>
            <person name="Ishida J."/>
            <person name="Jiang P.X."/>
            <person name="Jones T."/>
            <person name="Kawai J."/>
            <person name="Kamiya A."/>
            <person name="Meyers C."/>
            <person name="Nakajima M."/>
            <person name="Narusaka M."/>
            <person name="Seki M."/>
            <person name="Sakurai T."/>
            <person name="Satou M."/>
            <person name="Tamse R."/>
            <person name="Vaysberg M."/>
            <person name="Wallender E.K."/>
            <person name="Wong C."/>
            <person name="Yamamura Y."/>
            <person name="Yuan S."/>
            <person name="Shinozaki K."/>
            <person name="Davis R.W."/>
            <person name="Theologis A."/>
            <person name="Ecker J.R."/>
        </authorList>
    </citation>
    <scope>NUCLEOTIDE SEQUENCE [LARGE SCALE MRNA]</scope>
    <source>
        <strain>cv. Columbia</strain>
    </source>
</reference>
<reference key="4">
    <citation type="journal article" date="2013" name="Nat. Chem. Biol.">
        <title>Identification of three hydroxyproline O-arabinosyltransferases in Arabidopsis thaliana.</title>
        <authorList>
            <person name="Ogawa-Ohnishi M."/>
            <person name="Matsushita W."/>
            <person name="Matsubayashi Y."/>
        </authorList>
    </citation>
    <scope>FUNCTION</scope>
    <scope>CATALYTIC ACTIVITY</scope>
    <scope>TISSUE SPECIFICITY</scope>
    <scope>SUBCELLULAR LOCATION</scope>
    <scope>DISRUPTION PHENOTYPE</scope>
</reference>
<reference key="5">
    <citation type="journal article" date="2015" name="Plant Physiol.">
        <title>Low sugar is not always good: impact of specific o-glycan defects on tip growth in Arabidopsis.</title>
        <authorList>
            <person name="Velasquez S.M."/>
            <person name="Marzol E."/>
            <person name="Borassi C."/>
            <person name="Pol-Fachin L."/>
            <person name="Ricardi M.M."/>
            <person name="Mangano S."/>
            <person name="Juarez S.P."/>
            <person name="Salter J.D."/>
            <person name="Dorosz J.G."/>
            <person name="Marcus S.E."/>
            <person name="Knox J.P."/>
            <person name="Dinneny J.R."/>
            <person name="Iusem N.D."/>
            <person name="Verli H."/>
            <person name="Estevez J.M."/>
        </authorList>
    </citation>
    <scope>DISRUPTION PHENOTYPE</scope>
</reference>
<reference key="6">
    <citation type="journal article" date="2016" name="Plant J.">
        <title>Hydroxyproline O-arabinosyltransferase mutants oppositely alter tip growth in Arabidopsis thaliana and Physcomitrella patens.</title>
        <authorList>
            <person name="MacAlister C.A."/>
            <person name="Ortiz-Ramirez C."/>
            <person name="Becker J.D."/>
            <person name="Feijo J.A."/>
            <person name="Lippman Z.B."/>
        </authorList>
    </citation>
    <scope>FUNCTION</scope>
    <scope>DISRUPTION PHENOTYPE</scope>
</reference>
<feature type="chain" id="PRO_0000437955" description="Hydroxyproline O-arabinosyltransferase 2">
    <location>
        <begin position="1"/>
        <end position="358"/>
    </location>
</feature>
<feature type="transmembrane region" description="Helical; Signal-anchor" evidence="1">
    <location>
        <begin position="7"/>
        <end position="26"/>
    </location>
</feature>
<name>HPAT2_ARATH</name>
<gene>
    <name evidence="5" type="primary">HPAT2</name>
    <name evidence="7" type="ordered locus">At2g25260</name>
    <name evidence="8" type="ORF">T22F11.15</name>
</gene>
<evidence type="ECO:0000255" key="1"/>
<evidence type="ECO:0000269" key="2">
    <source>
    </source>
</evidence>
<evidence type="ECO:0000269" key="3">
    <source>
    </source>
</evidence>
<evidence type="ECO:0000269" key="4">
    <source>
    </source>
</evidence>
<evidence type="ECO:0000303" key="5">
    <source>
    </source>
</evidence>
<evidence type="ECO:0000305" key="6"/>
<evidence type="ECO:0000312" key="7">
    <source>
        <dbReference type="Araport" id="AT2G25260"/>
    </source>
</evidence>
<evidence type="ECO:0000312" key="8">
    <source>
        <dbReference type="EMBL" id="AAD23665.1"/>
    </source>
</evidence>
<evidence type="ECO:0000312" key="9">
    <source>
        <dbReference type="EMBL" id="AAZ23916.1"/>
    </source>
</evidence>
<keyword id="KW-0328">Glycosyltransferase</keyword>
<keyword id="KW-0333">Golgi apparatus</keyword>
<keyword id="KW-0472">Membrane</keyword>
<keyword id="KW-1185">Reference proteome</keyword>
<keyword id="KW-0735">Signal-anchor</keyword>
<keyword id="KW-0808">Transferase</keyword>
<keyword id="KW-0812">Transmembrane</keyword>
<keyword id="KW-1133">Transmembrane helix</keyword>
<accession>Q494Q2</accession>
<accession>Q9SIR7</accession>
<comment type="function">
    <text evidence="2 4">Glycosyltransferase involved in the O-arabinosylation of several proteins including extensins and small signaling peptides (PubMed:24036508, PubMed:26577059). Catalyzes the transfer of the initial L-arabinose to the hydroxyl group of Hyp residues (PubMed:24036508). Contributes redundantly with HPAT1 and HPAT3 to arabinosylation of EXT3 (PubMed:24036508).</text>
</comment>
<comment type="catalytic activity">
    <reaction evidence="2">
        <text>trans-4-hydroxy-L-prolyl-[protein] + UDP-beta-L-arabinofuranose = O-(beta-L-arabinofuranosyl)-trans-4-hydroxy-L-prolyl-[protein] + UDP + H(+)</text>
        <dbReference type="Rhea" id="RHEA:49472"/>
        <dbReference type="Rhea" id="RHEA-COMP:12408"/>
        <dbReference type="Rhea" id="RHEA-COMP:12409"/>
        <dbReference type="ChEBI" id="CHEBI:15378"/>
        <dbReference type="ChEBI" id="CHEBI:58223"/>
        <dbReference type="ChEBI" id="CHEBI:61463"/>
        <dbReference type="ChEBI" id="CHEBI:61965"/>
        <dbReference type="ChEBI" id="CHEBI:131610"/>
        <dbReference type="EC" id="2.4.2.58"/>
    </reaction>
</comment>
<comment type="subcellular location">
    <subcellularLocation>
        <location evidence="2">Golgi apparatus</location>
        <location evidence="2">cis-Golgi network membrane</location>
        <topology evidence="1">Single-pass type II membrane protein</topology>
    </subcellularLocation>
</comment>
<comment type="tissue specificity">
    <text evidence="2">Ubiquitous.</text>
</comment>
<comment type="disruption phenotype">
    <text evidence="2 3 4">No visible phenotype (PubMed:24036508). Short-root-hair phenotype (PubMed:25944827). Hpat1 hpat2 double mutants have longer hypocotyls, are early flowering and show early senescence in leaves associated with a decrease in chlorophyll content (PubMed:24036508). Hpat1 hpat2 hpat3 triple mutants fail to produce detectable levels of Hyp-arabinosides, have low fertility and shorter pollen tubes (PubMed:26577059).</text>
</comment>
<comment type="sequence caution" evidence="6">
    <conflict type="erroneous gene model prediction">
        <sequence resource="EMBL-CDS" id="AAD23665"/>
    </conflict>
</comment>
<dbReference type="EC" id="2.4.2.58" evidence="2"/>
<dbReference type="EMBL" id="AC007070">
    <property type="protein sequence ID" value="AAD23665.1"/>
    <property type="status" value="ALT_SEQ"/>
    <property type="molecule type" value="Genomic_DNA"/>
</dbReference>
<dbReference type="EMBL" id="CP002685">
    <property type="protein sequence ID" value="AEC07677.1"/>
    <property type="molecule type" value="Genomic_DNA"/>
</dbReference>
<dbReference type="EMBL" id="BT023724">
    <property type="protein sequence ID" value="AAZ23916.1"/>
    <property type="molecule type" value="mRNA"/>
</dbReference>
<dbReference type="PIR" id="C84646">
    <property type="entry name" value="C84646"/>
</dbReference>
<dbReference type="RefSeq" id="NP_180098.3">
    <property type="nucleotide sequence ID" value="NM_128083.4"/>
</dbReference>
<dbReference type="FunCoup" id="Q494Q2">
    <property type="interactions" value="12"/>
</dbReference>
<dbReference type="STRING" id="3702.Q494Q2"/>
<dbReference type="PaxDb" id="3702-AT2G25260.1"/>
<dbReference type="ProteomicsDB" id="232172"/>
<dbReference type="EnsemblPlants" id="AT2G25260.1">
    <property type="protein sequence ID" value="AT2G25260.1"/>
    <property type="gene ID" value="AT2G25260"/>
</dbReference>
<dbReference type="GeneID" id="817064"/>
<dbReference type="Gramene" id="AT2G25260.1">
    <property type="protein sequence ID" value="AT2G25260.1"/>
    <property type="gene ID" value="AT2G25260"/>
</dbReference>
<dbReference type="KEGG" id="ath:AT2G25260"/>
<dbReference type="Araport" id="AT2G25260"/>
<dbReference type="TAIR" id="AT2G25260">
    <property type="gene designation" value="HPAT2"/>
</dbReference>
<dbReference type="eggNOG" id="ENOG502QQNK">
    <property type="taxonomic scope" value="Eukaryota"/>
</dbReference>
<dbReference type="HOGENOM" id="CLU_065254_0_0_1"/>
<dbReference type="InParanoid" id="Q494Q2"/>
<dbReference type="OMA" id="ARIHYYW"/>
<dbReference type="OrthoDB" id="10259977at2759"/>
<dbReference type="PhylomeDB" id="Q494Q2"/>
<dbReference type="BioCyc" id="ARA:AT2G25260-MONOMER"/>
<dbReference type="PRO" id="PR:Q494Q2"/>
<dbReference type="Proteomes" id="UP000006548">
    <property type="component" value="Chromosome 2"/>
</dbReference>
<dbReference type="ExpressionAtlas" id="Q494Q2">
    <property type="expression patterns" value="baseline and differential"/>
</dbReference>
<dbReference type="GO" id="GO:0005794">
    <property type="term" value="C:Golgi apparatus"/>
    <property type="evidence" value="ECO:0007669"/>
    <property type="project" value="UniProtKB-SubCell"/>
</dbReference>
<dbReference type="GO" id="GO:0016020">
    <property type="term" value="C:membrane"/>
    <property type="evidence" value="ECO:0007669"/>
    <property type="project" value="UniProtKB-KW"/>
</dbReference>
<dbReference type="GO" id="GO:1990585">
    <property type="term" value="F:hydroxyproline O-arabinosyltransferase activity"/>
    <property type="evidence" value="ECO:0000314"/>
    <property type="project" value="TAIR"/>
</dbReference>
<dbReference type="InterPro" id="IPR056508">
    <property type="entry name" value="HPAT-like"/>
</dbReference>
<dbReference type="InterPro" id="IPR044845">
    <property type="entry name" value="HPAT/SRGT1-like"/>
</dbReference>
<dbReference type="PANTHER" id="PTHR31485:SF20">
    <property type="entry name" value="HYDROXYPROLINE O-ARABINOSYLTRANSFERASE 2"/>
    <property type="match status" value="1"/>
</dbReference>
<dbReference type="PANTHER" id="PTHR31485">
    <property type="entry name" value="PEPTIDYL SERINE ALPHA-GALACTOSYLTRANSFERASE"/>
    <property type="match status" value="1"/>
</dbReference>
<dbReference type="Pfam" id="PF23452">
    <property type="entry name" value="HPAT"/>
    <property type="match status" value="1"/>
</dbReference>
<protein>
    <recommendedName>
        <fullName evidence="5">Hydroxyproline O-arabinosyltransferase 2</fullName>
        <ecNumber evidence="2">2.4.2.58</ecNumber>
    </recommendedName>
</protein>
<sequence length="358" mass="40972">MGFRGKYFFPILMTLSLFLIIRYNYIVSDDPPLRQELPGRRSASSGDDITYTVKTPSKKTKRLFHTAVTATDSVYSTWQCRVMYYWYNRFRDEPGSDMGGYTRILHSGRPDGLMDEIPTFVADPLPSGVDKGYVVLNRPWAFVQWLQQAHIEEDYILMAEPDHIIVKPIPNLARGNLAAAFPFFYIEPKKYESVLRKFFPKENGPISRIDPIGNSPVIVTKNALMKIAPTWMNVSLAMKNDPQTDKAFGWVLEMYAYAVSSALHGVSNILHKDFMIQPPWDTETKKTFIIHYTYGCDFDMKGKMMVGKIGEWRFDKRSYGDKPPPRNLTLPPRGVPESVVTLVTMINEATANIPNWES</sequence>
<proteinExistence type="evidence at protein level"/>
<organism evidence="9">
    <name type="scientific">Arabidopsis thaliana</name>
    <name type="common">Mouse-ear cress</name>
    <dbReference type="NCBI Taxonomy" id="3702"/>
    <lineage>
        <taxon>Eukaryota</taxon>
        <taxon>Viridiplantae</taxon>
        <taxon>Streptophyta</taxon>
        <taxon>Embryophyta</taxon>
        <taxon>Tracheophyta</taxon>
        <taxon>Spermatophyta</taxon>
        <taxon>Magnoliopsida</taxon>
        <taxon>eudicotyledons</taxon>
        <taxon>Gunneridae</taxon>
        <taxon>Pentapetalae</taxon>
        <taxon>rosids</taxon>
        <taxon>malvids</taxon>
        <taxon>Brassicales</taxon>
        <taxon>Brassicaceae</taxon>
        <taxon>Camelineae</taxon>
        <taxon>Arabidopsis</taxon>
    </lineage>
</organism>